<organism>
    <name type="scientific">Schizosaccharomyces pombe (strain 972 / ATCC 24843)</name>
    <name type="common">Fission yeast</name>
    <dbReference type="NCBI Taxonomy" id="284812"/>
    <lineage>
        <taxon>Eukaryota</taxon>
        <taxon>Fungi</taxon>
        <taxon>Dikarya</taxon>
        <taxon>Ascomycota</taxon>
        <taxon>Taphrinomycotina</taxon>
        <taxon>Schizosaccharomycetes</taxon>
        <taxon>Schizosaccharomycetales</taxon>
        <taxon>Schizosaccharomycetaceae</taxon>
        <taxon>Schizosaccharomyces</taxon>
    </lineage>
</organism>
<evidence type="ECO:0000269" key="1">
    <source>
    </source>
</evidence>
<evidence type="ECO:0000305" key="2"/>
<reference key="1">
    <citation type="journal article" date="2002" name="Nature">
        <title>The genome sequence of Schizosaccharomyces pombe.</title>
        <authorList>
            <person name="Wood V."/>
            <person name="Gwilliam R."/>
            <person name="Rajandream M.A."/>
            <person name="Lyne M.H."/>
            <person name="Lyne R."/>
            <person name="Stewart A."/>
            <person name="Sgouros J.G."/>
            <person name="Peat N."/>
            <person name="Hayles J."/>
            <person name="Baker S.G."/>
            <person name="Basham D."/>
            <person name="Bowman S."/>
            <person name="Brooks K."/>
            <person name="Brown D."/>
            <person name="Brown S."/>
            <person name="Chillingworth T."/>
            <person name="Churcher C.M."/>
            <person name="Collins M."/>
            <person name="Connor R."/>
            <person name="Cronin A."/>
            <person name="Davis P."/>
            <person name="Feltwell T."/>
            <person name="Fraser A."/>
            <person name="Gentles S."/>
            <person name="Goble A."/>
            <person name="Hamlin N."/>
            <person name="Harris D.E."/>
            <person name="Hidalgo J."/>
            <person name="Hodgson G."/>
            <person name="Holroyd S."/>
            <person name="Hornsby T."/>
            <person name="Howarth S."/>
            <person name="Huckle E.J."/>
            <person name="Hunt S."/>
            <person name="Jagels K."/>
            <person name="James K.D."/>
            <person name="Jones L."/>
            <person name="Jones M."/>
            <person name="Leather S."/>
            <person name="McDonald S."/>
            <person name="McLean J."/>
            <person name="Mooney P."/>
            <person name="Moule S."/>
            <person name="Mungall K.L."/>
            <person name="Murphy L.D."/>
            <person name="Niblett D."/>
            <person name="Odell C."/>
            <person name="Oliver K."/>
            <person name="O'Neil S."/>
            <person name="Pearson D."/>
            <person name="Quail M.A."/>
            <person name="Rabbinowitsch E."/>
            <person name="Rutherford K.M."/>
            <person name="Rutter S."/>
            <person name="Saunders D."/>
            <person name="Seeger K."/>
            <person name="Sharp S."/>
            <person name="Skelton J."/>
            <person name="Simmonds M.N."/>
            <person name="Squares R."/>
            <person name="Squares S."/>
            <person name="Stevens K."/>
            <person name="Taylor K."/>
            <person name="Taylor R.G."/>
            <person name="Tivey A."/>
            <person name="Walsh S.V."/>
            <person name="Warren T."/>
            <person name="Whitehead S."/>
            <person name="Woodward J.R."/>
            <person name="Volckaert G."/>
            <person name="Aert R."/>
            <person name="Robben J."/>
            <person name="Grymonprez B."/>
            <person name="Weltjens I."/>
            <person name="Vanstreels E."/>
            <person name="Rieger M."/>
            <person name="Schaefer M."/>
            <person name="Mueller-Auer S."/>
            <person name="Gabel C."/>
            <person name="Fuchs M."/>
            <person name="Duesterhoeft A."/>
            <person name="Fritzc C."/>
            <person name="Holzer E."/>
            <person name="Moestl D."/>
            <person name="Hilbert H."/>
            <person name="Borzym K."/>
            <person name="Langer I."/>
            <person name="Beck A."/>
            <person name="Lehrach H."/>
            <person name="Reinhardt R."/>
            <person name="Pohl T.M."/>
            <person name="Eger P."/>
            <person name="Zimmermann W."/>
            <person name="Wedler H."/>
            <person name="Wambutt R."/>
            <person name="Purnelle B."/>
            <person name="Goffeau A."/>
            <person name="Cadieu E."/>
            <person name="Dreano S."/>
            <person name="Gloux S."/>
            <person name="Lelaure V."/>
            <person name="Mottier S."/>
            <person name="Galibert F."/>
            <person name="Aves S.J."/>
            <person name="Xiang Z."/>
            <person name="Hunt C."/>
            <person name="Moore K."/>
            <person name="Hurst S.M."/>
            <person name="Lucas M."/>
            <person name="Rochet M."/>
            <person name="Gaillardin C."/>
            <person name="Tallada V.A."/>
            <person name="Garzon A."/>
            <person name="Thode G."/>
            <person name="Daga R.R."/>
            <person name="Cruzado L."/>
            <person name="Jimenez J."/>
            <person name="Sanchez M."/>
            <person name="del Rey F."/>
            <person name="Benito J."/>
            <person name="Dominguez A."/>
            <person name="Revuelta J.L."/>
            <person name="Moreno S."/>
            <person name="Armstrong J."/>
            <person name="Forsburg S.L."/>
            <person name="Cerutti L."/>
            <person name="Lowe T."/>
            <person name="McCombie W.R."/>
            <person name="Paulsen I."/>
            <person name="Potashkin J."/>
            <person name="Shpakovski G.V."/>
            <person name="Ussery D."/>
            <person name="Barrell B.G."/>
            <person name="Nurse P."/>
        </authorList>
    </citation>
    <scope>NUCLEOTIDE SEQUENCE [LARGE SCALE GENOMIC DNA]</scope>
    <source>
        <strain>972 / ATCC 24843</strain>
    </source>
</reference>
<reference key="2">
    <citation type="journal article" date="2006" name="Nat. Biotechnol.">
        <title>ORFeome cloning and global analysis of protein localization in the fission yeast Schizosaccharomyces pombe.</title>
        <authorList>
            <person name="Matsuyama A."/>
            <person name="Arai R."/>
            <person name="Yashiroda Y."/>
            <person name="Shirai A."/>
            <person name="Kamata A."/>
            <person name="Sekido S."/>
            <person name="Kobayashi Y."/>
            <person name="Hashimoto A."/>
            <person name="Hamamoto M."/>
            <person name="Hiraoka Y."/>
            <person name="Horinouchi S."/>
            <person name="Yoshida M."/>
        </authorList>
    </citation>
    <scope>SUBCELLULAR LOCATION [LARGE SCALE ANALYSIS]</scope>
</reference>
<feature type="chain" id="PRO_0000116581" description="UPF0652 protein C22H10.08">
    <location>
        <begin position="1"/>
        <end position="492"/>
    </location>
</feature>
<keyword id="KW-0963">Cytoplasm</keyword>
<keyword id="KW-0539">Nucleus</keyword>
<keyword id="KW-1185">Reference proteome</keyword>
<dbReference type="EMBL" id="CU329670">
    <property type="protein sequence ID" value="CAA93609.1"/>
    <property type="molecule type" value="Genomic_DNA"/>
</dbReference>
<dbReference type="PIR" id="T38211">
    <property type="entry name" value="T38211"/>
</dbReference>
<dbReference type="RefSeq" id="NP_593745.1">
    <property type="nucleotide sequence ID" value="NM_001019176.2"/>
</dbReference>
<dbReference type="SMR" id="Q10301"/>
<dbReference type="BioGRID" id="278226">
    <property type="interactions" value="5"/>
</dbReference>
<dbReference type="PaxDb" id="4896-SPAC22H10.08.1"/>
<dbReference type="EnsemblFungi" id="SPAC22H10.08.1">
    <property type="protein sequence ID" value="SPAC22H10.08.1:pep"/>
    <property type="gene ID" value="SPAC22H10.08"/>
</dbReference>
<dbReference type="KEGG" id="spo:2541732"/>
<dbReference type="PomBase" id="SPAC22H10.08"/>
<dbReference type="VEuPathDB" id="FungiDB:SPAC22H10.08"/>
<dbReference type="eggNOG" id="ENOG502QRJJ">
    <property type="taxonomic scope" value="Eukaryota"/>
</dbReference>
<dbReference type="HOGENOM" id="CLU_021807_0_0_1"/>
<dbReference type="InParanoid" id="Q10301"/>
<dbReference type="OMA" id="DAFAHMF"/>
<dbReference type="PhylomeDB" id="Q10301"/>
<dbReference type="PRO" id="PR:Q10301"/>
<dbReference type="Proteomes" id="UP000002485">
    <property type="component" value="Chromosome I"/>
</dbReference>
<dbReference type="GO" id="GO:0005829">
    <property type="term" value="C:cytosol"/>
    <property type="evidence" value="ECO:0007005"/>
    <property type="project" value="PomBase"/>
</dbReference>
<dbReference type="GO" id="GO:0005634">
    <property type="term" value="C:nucleus"/>
    <property type="evidence" value="ECO:0007005"/>
    <property type="project" value="PomBase"/>
</dbReference>
<dbReference type="InterPro" id="IPR018553">
    <property type="entry name" value="DUF2009"/>
</dbReference>
<dbReference type="PANTHER" id="PTHR31560">
    <property type="entry name" value="UPF0652 PROTEIN C16A11.03C-RELATED"/>
    <property type="match status" value="1"/>
</dbReference>
<dbReference type="PANTHER" id="PTHR31560:SF0">
    <property type="entry name" value="UPF0652 PROTEIN C22H10.08"/>
    <property type="match status" value="1"/>
</dbReference>
<dbReference type="Pfam" id="PF09418">
    <property type="entry name" value="DUF2009"/>
    <property type="match status" value="1"/>
</dbReference>
<sequence length="492" mass="56535">MDAEALRNLYLSSILPNESKTGNESPEKKFSSPVLLQRAKVIPLRLEYEERKLLHLLTAALDVSDYTDSVDTLSFSSPAKRLAQQLKGITAVLSGIMVAYDYKVGQELLEHKNFEQHAEFFKKIFEIGRRYKVLNPNRLGSTYGKLMYFVQDSMRPEIQDALGFNLFKPILTVYEFLNERDALNALEDPYAEIATMEIVAENRSRSAIQKDIKAKERAVEHIAKKYYSSKITKEKVRWCLYSIADSNSYLRYNRDPIAKLIGLVEAYFSPDTVDDEFTLAIDAINGSRLKHSHYKQYHYVVQSLHLWLLIMGEIFSLWALSDLELTNPDMEYKLIDNNQGIHRMQPCPNIRIAMERILRTAQEQSETWIGSSTIHLGDTAVPNALLFIDKYMQVPRILTPLVLLFKELDSLNDHSLLNYIDTAFGGREYLKKTILTDFMRFGFDGSGADNWFDAGSCIDGRLTSAWNWANNIHTKDYYRVLLMSGFLSFNGE</sequence>
<accession>Q10301</accession>
<gene>
    <name type="ORF">SPAC22H10.08</name>
</gene>
<comment type="subcellular location">
    <subcellularLocation>
        <location evidence="1">Cytoplasm</location>
    </subcellularLocation>
    <subcellularLocation>
        <location evidence="1">Nucleus</location>
    </subcellularLocation>
</comment>
<comment type="similarity">
    <text evidence="2">Belongs to the UPF0652 family.</text>
</comment>
<proteinExistence type="inferred from homology"/>
<protein>
    <recommendedName>
        <fullName>UPF0652 protein C22H10.08</fullName>
    </recommendedName>
</protein>
<name>YD48_SCHPO</name>